<dbReference type="EC" id="2.1.3.15" evidence="1"/>
<dbReference type="EMBL" id="CP000247">
    <property type="protein sequence ID" value="ABG70349.1"/>
    <property type="molecule type" value="Genomic_DNA"/>
</dbReference>
<dbReference type="RefSeq" id="WP_000118397.1">
    <property type="nucleotide sequence ID" value="NC_008253.1"/>
</dbReference>
<dbReference type="SMR" id="Q0TFD0"/>
<dbReference type="KEGG" id="ecp:ECP_2355"/>
<dbReference type="HOGENOM" id="CLU_015486_1_0_6"/>
<dbReference type="UniPathway" id="UPA00655">
    <property type="reaction ID" value="UER00711"/>
</dbReference>
<dbReference type="Proteomes" id="UP000009182">
    <property type="component" value="Chromosome"/>
</dbReference>
<dbReference type="GO" id="GO:0009329">
    <property type="term" value="C:acetate CoA-transferase complex"/>
    <property type="evidence" value="ECO:0007669"/>
    <property type="project" value="TreeGrafter"/>
</dbReference>
<dbReference type="GO" id="GO:0003989">
    <property type="term" value="F:acetyl-CoA carboxylase activity"/>
    <property type="evidence" value="ECO:0007669"/>
    <property type="project" value="InterPro"/>
</dbReference>
<dbReference type="GO" id="GO:0005524">
    <property type="term" value="F:ATP binding"/>
    <property type="evidence" value="ECO:0007669"/>
    <property type="project" value="UniProtKB-KW"/>
</dbReference>
<dbReference type="GO" id="GO:0016743">
    <property type="term" value="F:carboxyl- or carbamoyltransferase activity"/>
    <property type="evidence" value="ECO:0007669"/>
    <property type="project" value="UniProtKB-UniRule"/>
</dbReference>
<dbReference type="GO" id="GO:0008270">
    <property type="term" value="F:zinc ion binding"/>
    <property type="evidence" value="ECO:0007669"/>
    <property type="project" value="UniProtKB-UniRule"/>
</dbReference>
<dbReference type="GO" id="GO:0006633">
    <property type="term" value="P:fatty acid biosynthetic process"/>
    <property type="evidence" value="ECO:0007669"/>
    <property type="project" value="UniProtKB-KW"/>
</dbReference>
<dbReference type="GO" id="GO:2001295">
    <property type="term" value="P:malonyl-CoA biosynthetic process"/>
    <property type="evidence" value="ECO:0007669"/>
    <property type="project" value="UniProtKB-UniRule"/>
</dbReference>
<dbReference type="FunFam" id="3.90.226.10:FF:000013">
    <property type="entry name" value="Acetyl-coenzyme A carboxylase carboxyl transferase subunit beta"/>
    <property type="match status" value="1"/>
</dbReference>
<dbReference type="Gene3D" id="3.90.226.10">
    <property type="entry name" value="2-enoyl-CoA Hydratase, Chain A, domain 1"/>
    <property type="match status" value="1"/>
</dbReference>
<dbReference type="HAMAP" id="MF_01395">
    <property type="entry name" value="AcetylCoA_CT_beta"/>
    <property type="match status" value="1"/>
</dbReference>
<dbReference type="InterPro" id="IPR034733">
    <property type="entry name" value="AcCoA_carboxyl_beta"/>
</dbReference>
<dbReference type="InterPro" id="IPR000438">
    <property type="entry name" value="Acetyl_CoA_COase_Trfase_b_su"/>
</dbReference>
<dbReference type="InterPro" id="IPR029045">
    <property type="entry name" value="ClpP/crotonase-like_dom_sf"/>
</dbReference>
<dbReference type="InterPro" id="IPR011762">
    <property type="entry name" value="COA_CT_N"/>
</dbReference>
<dbReference type="InterPro" id="IPR041010">
    <property type="entry name" value="Znf-ACC"/>
</dbReference>
<dbReference type="NCBIfam" id="TIGR00515">
    <property type="entry name" value="accD"/>
    <property type="match status" value="1"/>
</dbReference>
<dbReference type="PANTHER" id="PTHR42995">
    <property type="entry name" value="ACETYL-COENZYME A CARBOXYLASE CARBOXYL TRANSFERASE SUBUNIT BETA, CHLOROPLASTIC"/>
    <property type="match status" value="1"/>
</dbReference>
<dbReference type="PANTHER" id="PTHR42995:SF5">
    <property type="entry name" value="ACETYL-COENZYME A CARBOXYLASE CARBOXYL TRANSFERASE SUBUNIT BETA, CHLOROPLASTIC"/>
    <property type="match status" value="1"/>
</dbReference>
<dbReference type="Pfam" id="PF01039">
    <property type="entry name" value="Carboxyl_trans"/>
    <property type="match status" value="1"/>
</dbReference>
<dbReference type="Pfam" id="PF17848">
    <property type="entry name" value="Zn_ribbon_ACC"/>
    <property type="match status" value="1"/>
</dbReference>
<dbReference type="PRINTS" id="PR01070">
    <property type="entry name" value="ACCCTRFRASEB"/>
</dbReference>
<dbReference type="SUPFAM" id="SSF52096">
    <property type="entry name" value="ClpP/crotonase"/>
    <property type="match status" value="1"/>
</dbReference>
<dbReference type="PROSITE" id="PS50980">
    <property type="entry name" value="COA_CT_NTER"/>
    <property type="match status" value="1"/>
</dbReference>
<comment type="function">
    <text evidence="1">Component of the acetyl coenzyme A carboxylase (ACC) complex. Biotin carboxylase (BC) catalyzes the carboxylation of biotin on its carrier protein (BCCP) and then the CO(2) group is transferred by the transcarboxylase to acetyl-CoA to form malonyl-CoA.</text>
</comment>
<comment type="catalytic activity">
    <reaction evidence="1">
        <text>N(6)-carboxybiotinyl-L-lysyl-[protein] + acetyl-CoA = N(6)-biotinyl-L-lysyl-[protein] + malonyl-CoA</text>
        <dbReference type="Rhea" id="RHEA:54728"/>
        <dbReference type="Rhea" id="RHEA-COMP:10505"/>
        <dbReference type="Rhea" id="RHEA-COMP:10506"/>
        <dbReference type="ChEBI" id="CHEBI:57288"/>
        <dbReference type="ChEBI" id="CHEBI:57384"/>
        <dbReference type="ChEBI" id="CHEBI:83144"/>
        <dbReference type="ChEBI" id="CHEBI:83145"/>
        <dbReference type="EC" id="2.1.3.15"/>
    </reaction>
</comment>
<comment type="cofactor">
    <cofactor evidence="1">
        <name>Zn(2+)</name>
        <dbReference type="ChEBI" id="CHEBI:29105"/>
    </cofactor>
    <text evidence="1">Binds 1 zinc ion per subunit.</text>
</comment>
<comment type="pathway">
    <text evidence="1">Lipid metabolism; malonyl-CoA biosynthesis; malonyl-CoA from acetyl-CoA: step 1/1.</text>
</comment>
<comment type="subunit">
    <text evidence="1">Acetyl-CoA carboxylase is a heterohexamer composed of biotin carboxyl carrier protein (AccB), biotin carboxylase (AccC) and two subunits each of ACCase subunit alpha (AccA) and ACCase subunit beta (AccD).</text>
</comment>
<comment type="subcellular location">
    <subcellularLocation>
        <location evidence="1">Cytoplasm</location>
    </subcellularLocation>
</comment>
<comment type="similarity">
    <text evidence="1">Belongs to the AccD/PCCB family.</text>
</comment>
<accession>Q0TFD0</accession>
<reference key="1">
    <citation type="journal article" date="2006" name="Mol. Microbiol.">
        <title>Role of pathogenicity island-associated integrases in the genome plasticity of uropathogenic Escherichia coli strain 536.</title>
        <authorList>
            <person name="Hochhut B."/>
            <person name="Wilde C."/>
            <person name="Balling G."/>
            <person name="Middendorf B."/>
            <person name="Dobrindt U."/>
            <person name="Brzuszkiewicz E."/>
            <person name="Gottschalk G."/>
            <person name="Carniel E."/>
            <person name="Hacker J."/>
        </authorList>
    </citation>
    <scope>NUCLEOTIDE SEQUENCE [LARGE SCALE GENOMIC DNA]</scope>
    <source>
        <strain>536 / UPEC</strain>
    </source>
</reference>
<protein>
    <recommendedName>
        <fullName evidence="1">Acetyl-coenzyme A carboxylase carboxyl transferase subunit beta</fullName>
        <shortName evidence="1">ACCase subunit beta</shortName>
        <shortName evidence="1">Acetyl-CoA carboxylase carboxyltransferase subunit beta</shortName>
        <ecNumber evidence="1">2.1.3.15</ecNumber>
    </recommendedName>
</protein>
<gene>
    <name evidence="1" type="primary">accD</name>
    <name type="ordered locus">ECP_2355</name>
</gene>
<name>ACCD_ECOL5</name>
<keyword id="KW-0067">ATP-binding</keyword>
<keyword id="KW-0963">Cytoplasm</keyword>
<keyword id="KW-0275">Fatty acid biosynthesis</keyword>
<keyword id="KW-0276">Fatty acid metabolism</keyword>
<keyword id="KW-0444">Lipid biosynthesis</keyword>
<keyword id="KW-0443">Lipid metabolism</keyword>
<keyword id="KW-0479">Metal-binding</keyword>
<keyword id="KW-0547">Nucleotide-binding</keyword>
<keyword id="KW-0808">Transferase</keyword>
<keyword id="KW-0862">Zinc</keyword>
<keyword id="KW-0863">Zinc-finger</keyword>
<feature type="chain" id="PRO_0000358992" description="Acetyl-coenzyme A carboxylase carboxyl transferase subunit beta">
    <location>
        <begin position="1"/>
        <end position="304"/>
    </location>
</feature>
<feature type="domain" description="CoA carboxyltransferase N-terminal" evidence="2">
    <location>
        <begin position="23"/>
        <end position="292"/>
    </location>
</feature>
<feature type="zinc finger region" description="C4-type" evidence="1">
    <location>
        <begin position="27"/>
        <end position="49"/>
    </location>
</feature>
<feature type="region of interest" description="Disordered" evidence="3">
    <location>
        <begin position="284"/>
        <end position="304"/>
    </location>
</feature>
<feature type="compositionally biased region" description="Pro residues" evidence="3">
    <location>
        <begin position="295"/>
        <end position="304"/>
    </location>
</feature>
<feature type="binding site" evidence="1">
    <location>
        <position position="27"/>
    </location>
    <ligand>
        <name>Zn(2+)</name>
        <dbReference type="ChEBI" id="CHEBI:29105"/>
    </ligand>
</feature>
<feature type="binding site" evidence="1">
    <location>
        <position position="30"/>
    </location>
    <ligand>
        <name>Zn(2+)</name>
        <dbReference type="ChEBI" id="CHEBI:29105"/>
    </ligand>
</feature>
<feature type="binding site" evidence="1">
    <location>
        <position position="46"/>
    </location>
    <ligand>
        <name>Zn(2+)</name>
        <dbReference type="ChEBI" id="CHEBI:29105"/>
    </ligand>
</feature>
<feature type="binding site" evidence="1">
    <location>
        <position position="49"/>
    </location>
    <ligand>
        <name>Zn(2+)</name>
        <dbReference type="ChEBI" id="CHEBI:29105"/>
    </ligand>
</feature>
<proteinExistence type="inferred from homology"/>
<evidence type="ECO:0000255" key="1">
    <source>
        <dbReference type="HAMAP-Rule" id="MF_01395"/>
    </source>
</evidence>
<evidence type="ECO:0000255" key="2">
    <source>
        <dbReference type="PROSITE-ProRule" id="PRU01136"/>
    </source>
</evidence>
<evidence type="ECO:0000256" key="3">
    <source>
        <dbReference type="SAM" id="MobiDB-lite"/>
    </source>
</evidence>
<sequence>MSWIERIKSNITPTRKASIPEGVWTKCDSCGQVLYRAELERNLEVCPKCDHHMRMTARNRLHSLLDEGSLVELGSELEPKDVLKFRDSKKYKDRLASAQKETGEKDALVVMKGTLYGMPVVAAAFEFAFMGGSMGSVVGARFVRAVEQALEDNCPLICFSASGGARMQEALMSLMQMAKTSAALAKMQERGLPYISVLTDPTMGGVSASFAMLGDLNIAEPKALIGFAGPRVIEQTVREKLPPGFQRSEFLIEKGAIDMIIRRPEMRLKLASILAKLMNLPAPNPEAPREGVVVPPVPDQEPEA</sequence>
<organism>
    <name type="scientific">Escherichia coli O6:K15:H31 (strain 536 / UPEC)</name>
    <dbReference type="NCBI Taxonomy" id="362663"/>
    <lineage>
        <taxon>Bacteria</taxon>
        <taxon>Pseudomonadati</taxon>
        <taxon>Pseudomonadota</taxon>
        <taxon>Gammaproteobacteria</taxon>
        <taxon>Enterobacterales</taxon>
        <taxon>Enterobacteriaceae</taxon>
        <taxon>Escherichia</taxon>
    </lineage>
</organism>